<comment type="subcellular location">
    <subcellularLocation>
        <location evidence="1">Cell membrane</location>
        <topology evidence="1">Multi-pass membrane protein</topology>
    </subcellularLocation>
</comment>
<comment type="similarity">
    <text evidence="1">Belongs to the UPF0756 family.</text>
</comment>
<dbReference type="EMBL" id="CP000001">
    <property type="protein sequence ID" value="AAU15933.1"/>
    <property type="molecule type" value="Genomic_DNA"/>
</dbReference>
<dbReference type="RefSeq" id="WP_000625507.1">
    <property type="nucleotide sequence ID" value="NZ_CP009968.1"/>
</dbReference>
<dbReference type="KEGG" id="bcz:BCE33L4336"/>
<dbReference type="PATRIC" id="fig|288681.22.peg.1036"/>
<dbReference type="Proteomes" id="UP000002612">
    <property type="component" value="Chromosome"/>
</dbReference>
<dbReference type="GO" id="GO:0005886">
    <property type="term" value="C:plasma membrane"/>
    <property type="evidence" value="ECO:0007669"/>
    <property type="project" value="UniProtKB-SubCell"/>
</dbReference>
<dbReference type="HAMAP" id="MF_01874">
    <property type="entry name" value="UPF0756"/>
    <property type="match status" value="1"/>
</dbReference>
<dbReference type="InterPro" id="IPR007382">
    <property type="entry name" value="UPF0756_TM"/>
</dbReference>
<dbReference type="PANTHER" id="PTHR38452">
    <property type="entry name" value="UPF0756 MEMBRANE PROTEIN YEAL"/>
    <property type="match status" value="1"/>
</dbReference>
<dbReference type="PANTHER" id="PTHR38452:SF1">
    <property type="entry name" value="UPF0756 MEMBRANE PROTEIN YEAL"/>
    <property type="match status" value="1"/>
</dbReference>
<dbReference type="Pfam" id="PF04284">
    <property type="entry name" value="DUF441"/>
    <property type="match status" value="1"/>
</dbReference>
<gene>
    <name type="ordered locus">BCE33L4336</name>
</gene>
<keyword id="KW-1003">Cell membrane</keyword>
<keyword id="KW-0472">Membrane</keyword>
<keyword id="KW-0812">Transmembrane</keyword>
<keyword id="KW-1133">Transmembrane helix</keyword>
<organism>
    <name type="scientific">Bacillus cereus (strain ZK / E33L)</name>
    <dbReference type="NCBI Taxonomy" id="288681"/>
    <lineage>
        <taxon>Bacteria</taxon>
        <taxon>Bacillati</taxon>
        <taxon>Bacillota</taxon>
        <taxon>Bacilli</taxon>
        <taxon>Bacillales</taxon>
        <taxon>Bacillaceae</taxon>
        <taxon>Bacillus</taxon>
        <taxon>Bacillus cereus group</taxon>
    </lineage>
</organism>
<protein>
    <recommendedName>
        <fullName evidence="1">UPF0756 membrane protein BCE33L4336</fullName>
    </recommendedName>
</protein>
<proteinExistence type="inferred from homology"/>
<feature type="chain" id="PRO_0000388829" description="UPF0756 membrane protein BCE33L4336">
    <location>
        <begin position="1"/>
        <end position="153"/>
    </location>
</feature>
<feature type="transmembrane region" description="Helical" evidence="1">
    <location>
        <begin position="8"/>
        <end position="28"/>
    </location>
</feature>
<feature type="transmembrane region" description="Helical" evidence="1">
    <location>
        <begin position="54"/>
        <end position="74"/>
    </location>
</feature>
<feature type="transmembrane region" description="Helical" evidence="1">
    <location>
        <begin position="87"/>
        <end position="107"/>
    </location>
</feature>
<feature type="transmembrane region" description="Helical" evidence="1">
    <location>
        <begin position="117"/>
        <end position="137"/>
    </location>
</feature>
<reference key="1">
    <citation type="journal article" date="2006" name="J. Bacteriol.">
        <title>Pathogenomic sequence analysis of Bacillus cereus and Bacillus thuringiensis isolates closely related to Bacillus anthracis.</title>
        <authorList>
            <person name="Han C.S."/>
            <person name="Xie G."/>
            <person name="Challacombe J.F."/>
            <person name="Altherr M.R."/>
            <person name="Bhotika S.S."/>
            <person name="Bruce D."/>
            <person name="Campbell C.S."/>
            <person name="Campbell M.L."/>
            <person name="Chen J."/>
            <person name="Chertkov O."/>
            <person name="Cleland C."/>
            <person name="Dimitrijevic M."/>
            <person name="Doggett N.A."/>
            <person name="Fawcett J.J."/>
            <person name="Glavina T."/>
            <person name="Goodwin L.A."/>
            <person name="Hill K.K."/>
            <person name="Hitchcock P."/>
            <person name="Jackson P.J."/>
            <person name="Keim P."/>
            <person name="Kewalramani A.R."/>
            <person name="Longmire J."/>
            <person name="Lucas S."/>
            <person name="Malfatti S."/>
            <person name="McMurry K."/>
            <person name="Meincke L.J."/>
            <person name="Misra M."/>
            <person name="Moseman B.L."/>
            <person name="Mundt M."/>
            <person name="Munk A.C."/>
            <person name="Okinaka R.T."/>
            <person name="Parson-Quintana B."/>
            <person name="Reilly L.P."/>
            <person name="Richardson P."/>
            <person name="Robinson D.L."/>
            <person name="Rubin E."/>
            <person name="Saunders E."/>
            <person name="Tapia R."/>
            <person name="Tesmer J.G."/>
            <person name="Thayer N."/>
            <person name="Thompson L.S."/>
            <person name="Tice H."/>
            <person name="Ticknor L.O."/>
            <person name="Wills P.L."/>
            <person name="Brettin T.S."/>
            <person name="Gilna P."/>
        </authorList>
    </citation>
    <scope>NUCLEOTIDE SEQUENCE [LARGE SCALE GENOMIC DNA]</scope>
    <source>
        <strain>ZK / E33L</strain>
    </source>
</reference>
<sequence>MISQSTLFLFILLIIGLIAKNQSLTVAIGVLFLLKFTFLGDKVFPYLQTKGINLGVTVITIAVLVPIATGEIGFKQLGEAAKSYYAWIALASGVAVALLAKGGVQLLTTDPHITTALVFGTIIAVALFNGVAVGPLIGAGIAYAVMSIIQMFK</sequence>
<accession>Q633K2</accession>
<name>Y4336_BACCZ</name>
<evidence type="ECO:0000255" key="1">
    <source>
        <dbReference type="HAMAP-Rule" id="MF_01874"/>
    </source>
</evidence>